<accession>P06614</accession>
<keyword id="KW-0002">3D-structure</keyword>
<keyword id="KW-0010">Activator</keyword>
<keyword id="KW-0028">Amino-acid biosynthesis</keyword>
<keyword id="KW-0198">Cysteine biosynthesis</keyword>
<keyword id="KW-0963">Cytoplasm</keyword>
<keyword id="KW-0903">Direct protein sequencing</keyword>
<keyword id="KW-0238">DNA-binding</keyword>
<keyword id="KW-1185">Reference proteome</keyword>
<keyword id="KW-0804">Transcription</keyword>
<keyword id="KW-0805">Transcription regulation</keyword>
<name>CYSB_SALTY</name>
<protein>
    <recommendedName>
        <fullName>HTH-type transcriptional regulator CysB</fullName>
    </recommendedName>
    <alternativeName>
        <fullName>Cys regulon transcriptional activator</fullName>
    </alternativeName>
</protein>
<gene>
    <name type="primary">cysB</name>
    <name type="ordered locus">STM1713</name>
</gene>
<sequence length="324" mass="36013">MKLQQLRYIVEVVNHNLNVSSTAEGLYTSQPGISKQVRMLEDELGIQIFARSGKHLTQVTPAGQEIIRIAREVLSKVDAIKSVAGEHTWPDKGSLYIATTHTQARYALPGVIKGFIERYPRVSLHMHQGSPTQIAEAVSKGNADFAIATEALHLYDDLVMLPCYHWNRSIVVTPDHPLAATSSVTIEALAQYPLVTYTFGFTGRSELDTAFNRAGLTPRIVFTATDADVIKTYVRLGLGVGVIASMAVDPLADPDLVRIDAHDIFSHSTTKIGFRRSTFLRSYMYDFIQRFAPHLTRDVVDTAVALRSNEEIEAMFQDIKLPEK</sequence>
<proteinExistence type="evidence at protein level"/>
<reference key="1">
    <citation type="journal article" date="1987" name="J. Biol. Chem.">
        <title>DNA sequences of the cysB regions of Salmonella typhimurium and Escherichia coli.</title>
        <authorList>
            <person name="Ostrowski J."/>
            <person name="Jagura-Burdzy G."/>
            <person name="Kredich N.M."/>
        </authorList>
    </citation>
    <scope>NUCLEOTIDE SEQUENCE [GENOMIC DNA]</scope>
</reference>
<reference key="2">
    <citation type="journal article" date="2001" name="Nature">
        <title>Complete genome sequence of Salmonella enterica serovar Typhimurium LT2.</title>
        <authorList>
            <person name="McClelland M."/>
            <person name="Sanderson K.E."/>
            <person name="Spieth J."/>
            <person name="Clifton S.W."/>
            <person name="Latreille P."/>
            <person name="Courtney L."/>
            <person name="Porwollik S."/>
            <person name="Ali J."/>
            <person name="Dante M."/>
            <person name="Du F."/>
            <person name="Hou S."/>
            <person name="Layman D."/>
            <person name="Leonard S."/>
            <person name="Nguyen C."/>
            <person name="Scott K."/>
            <person name="Holmes A."/>
            <person name="Grewal N."/>
            <person name="Mulvaney E."/>
            <person name="Ryan E."/>
            <person name="Sun H."/>
            <person name="Florea L."/>
            <person name="Miller W."/>
            <person name="Stoneking T."/>
            <person name="Nhan M."/>
            <person name="Waterston R."/>
            <person name="Wilson R.K."/>
        </authorList>
    </citation>
    <scope>NUCLEOTIDE SEQUENCE [LARGE SCALE GENOMIC DNA]</scope>
    <source>
        <strain>LT2 / SGSC1412 / ATCC 700720</strain>
    </source>
</reference>
<reference key="3">
    <citation type="journal article" date="1987" name="J. Biol. Chem.">
        <title>Purification of the cysB protein from Salmonella typhimurium.</title>
        <authorList>
            <person name="Miller B.E."/>
            <person name="Kredich N.M."/>
        </authorList>
    </citation>
    <scope>PARTIAL PROTEIN SEQUENCE</scope>
    <scope>CHARACTERIZATION</scope>
</reference>
<organism>
    <name type="scientific">Salmonella typhimurium (strain LT2 / SGSC1412 / ATCC 700720)</name>
    <dbReference type="NCBI Taxonomy" id="99287"/>
    <lineage>
        <taxon>Bacteria</taxon>
        <taxon>Pseudomonadati</taxon>
        <taxon>Pseudomonadota</taxon>
        <taxon>Gammaproteobacteria</taxon>
        <taxon>Enterobacterales</taxon>
        <taxon>Enterobacteriaceae</taxon>
        <taxon>Salmonella</taxon>
    </lineage>
</organism>
<dbReference type="EMBL" id="M15040">
    <property type="protein sequence ID" value="AAA27045.1"/>
    <property type="molecule type" value="Genomic_DNA"/>
</dbReference>
<dbReference type="EMBL" id="AE006468">
    <property type="protein sequence ID" value="AAL20631.1"/>
    <property type="molecule type" value="Genomic_DNA"/>
</dbReference>
<dbReference type="PIR" id="B26695">
    <property type="entry name" value="RGEBCB"/>
</dbReference>
<dbReference type="RefSeq" id="NP_460672.1">
    <property type="nucleotide sequence ID" value="NC_003197.2"/>
</dbReference>
<dbReference type="RefSeq" id="WP_000776233.1">
    <property type="nucleotide sequence ID" value="NC_003197.2"/>
</dbReference>
<dbReference type="PDB" id="4GWO">
    <property type="method" value="X-ray"/>
    <property type="resolution" value="2.39 A"/>
    <property type="chains" value="A/B=1-324"/>
</dbReference>
<dbReference type="PDB" id="4GXA">
    <property type="method" value="X-ray"/>
    <property type="resolution" value="2.81 A"/>
    <property type="chains" value="A/B=86-324"/>
</dbReference>
<dbReference type="PDB" id="4LON">
    <property type="method" value="X-ray"/>
    <property type="resolution" value="2.20 A"/>
    <property type="chains" value="B=86-324"/>
</dbReference>
<dbReference type="PDB" id="4LP2">
    <property type="method" value="X-ray"/>
    <property type="resolution" value="2.30 A"/>
    <property type="chains" value="B=86-324"/>
</dbReference>
<dbReference type="PDB" id="4LQ2">
    <property type="method" value="X-ray"/>
    <property type="resolution" value="2.69 A"/>
    <property type="chains" value="A=86-324"/>
</dbReference>
<dbReference type="PDB" id="4LQ5">
    <property type="method" value="X-ray"/>
    <property type="resolution" value="2.80 A"/>
    <property type="chains" value="A=86-324"/>
</dbReference>
<dbReference type="PDB" id="4M4G">
    <property type="method" value="X-ray"/>
    <property type="resolution" value="2.70 A"/>
    <property type="chains" value="A=86-324"/>
</dbReference>
<dbReference type="PDBsum" id="4GWO"/>
<dbReference type="PDBsum" id="4GXA"/>
<dbReference type="PDBsum" id="4LON"/>
<dbReference type="PDBsum" id="4LP2"/>
<dbReference type="PDBsum" id="4LQ2"/>
<dbReference type="PDBsum" id="4LQ5"/>
<dbReference type="PDBsum" id="4M4G"/>
<dbReference type="SMR" id="P06614"/>
<dbReference type="STRING" id="99287.STM1713"/>
<dbReference type="PaxDb" id="99287-STM1713"/>
<dbReference type="GeneID" id="1253232"/>
<dbReference type="KEGG" id="stm:STM1713"/>
<dbReference type="PATRIC" id="fig|99287.12.peg.1810"/>
<dbReference type="HOGENOM" id="CLU_039613_6_2_6"/>
<dbReference type="OMA" id="PVLQKFC"/>
<dbReference type="PhylomeDB" id="P06614"/>
<dbReference type="BioCyc" id="SENT99287:STM1713-MONOMER"/>
<dbReference type="EvolutionaryTrace" id="P06614"/>
<dbReference type="Proteomes" id="UP000001014">
    <property type="component" value="Chromosome"/>
</dbReference>
<dbReference type="GO" id="GO:0005737">
    <property type="term" value="C:cytoplasm"/>
    <property type="evidence" value="ECO:0007669"/>
    <property type="project" value="UniProtKB-SubCell"/>
</dbReference>
<dbReference type="GO" id="GO:0003700">
    <property type="term" value="F:DNA-binding transcription factor activity"/>
    <property type="evidence" value="ECO:0007669"/>
    <property type="project" value="InterPro"/>
</dbReference>
<dbReference type="GO" id="GO:0000976">
    <property type="term" value="F:transcription cis-regulatory region binding"/>
    <property type="evidence" value="ECO:0000318"/>
    <property type="project" value="GO_Central"/>
</dbReference>
<dbReference type="GO" id="GO:0019344">
    <property type="term" value="P:cysteine biosynthetic process"/>
    <property type="evidence" value="ECO:0000318"/>
    <property type="project" value="GO_Central"/>
</dbReference>
<dbReference type="GO" id="GO:0006355">
    <property type="term" value="P:regulation of DNA-templated transcription"/>
    <property type="evidence" value="ECO:0000318"/>
    <property type="project" value="GO_Central"/>
</dbReference>
<dbReference type="CDD" id="cd08443">
    <property type="entry name" value="PBP2_CysB"/>
    <property type="match status" value="1"/>
</dbReference>
<dbReference type="FunFam" id="1.10.10.10:FF:000021">
    <property type="entry name" value="HTH-type transcriptional regulator CysB"/>
    <property type="match status" value="1"/>
</dbReference>
<dbReference type="FunFam" id="3.40.190.10:FF:000037">
    <property type="entry name" value="HTH-type transcriptional regulator CysB"/>
    <property type="match status" value="1"/>
</dbReference>
<dbReference type="Gene3D" id="3.40.190.10">
    <property type="entry name" value="Periplasmic binding protein-like II"/>
    <property type="match status" value="2"/>
</dbReference>
<dbReference type="Gene3D" id="1.10.10.10">
    <property type="entry name" value="Winged helix-like DNA-binding domain superfamily/Winged helix DNA-binding domain"/>
    <property type="match status" value="1"/>
</dbReference>
<dbReference type="InterPro" id="IPR005119">
    <property type="entry name" value="LysR_subst-bd"/>
</dbReference>
<dbReference type="InterPro" id="IPR000847">
    <property type="entry name" value="Tscrpt_reg_HTH_LysR"/>
</dbReference>
<dbReference type="InterPro" id="IPR036388">
    <property type="entry name" value="WH-like_DNA-bd_sf"/>
</dbReference>
<dbReference type="InterPro" id="IPR036390">
    <property type="entry name" value="WH_DNA-bd_sf"/>
</dbReference>
<dbReference type="NCBIfam" id="NF009326">
    <property type="entry name" value="PRK12681.1"/>
    <property type="match status" value="1"/>
</dbReference>
<dbReference type="NCBIfam" id="NF009327">
    <property type="entry name" value="PRK12684.1"/>
    <property type="match status" value="1"/>
</dbReference>
<dbReference type="PANTHER" id="PTHR30126">
    <property type="entry name" value="HTH-TYPE TRANSCRIPTIONAL REGULATOR"/>
    <property type="match status" value="1"/>
</dbReference>
<dbReference type="PANTHER" id="PTHR30126:SF6">
    <property type="entry name" value="HTH-TYPE TRANSCRIPTIONAL REGULATOR CYSB-RELATED"/>
    <property type="match status" value="1"/>
</dbReference>
<dbReference type="Pfam" id="PF00126">
    <property type="entry name" value="HTH_1"/>
    <property type="match status" value="1"/>
</dbReference>
<dbReference type="Pfam" id="PF03466">
    <property type="entry name" value="LysR_substrate"/>
    <property type="match status" value="1"/>
</dbReference>
<dbReference type="PRINTS" id="PR00039">
    <property type="entry name" value="HTHLYSR"/>
</dbReference>
<dbReference type="SUPFAM" id="SSF53850">
    <property type="entry name" value="Periplasmic binding protein-like II"/>
    <property type="match status" value="1"/>
</dbReference>
<dbReference type="SUPFAM" id="SSF46785">
    <property type="entry name" value="Winged helix' DNA-binding domain"/>
    <property type="match status" value="1"/>
</dbReference>
<dbReference type="PROSITE" id="PS50931">
    <property type="entry name" value="HTH_LYSR"/>
    <property type="match status" value="1"/>
</dbReference>
<feature type="chain" id="PRO_0000105616" description="HTH-type transcriptional regulator CysB">
    <location>
        <begin position="1"/>
        <end position="324"/>
    </location>
</feature>
<feature type="domain" description="HTH lysR-type" evidence="1">
    <location>
        <begin position="1"/>
        <end position="59"/>
    </location>
</feature>
<feature type="DNA-binding region" description="H-T-H motif" evidence="1">
    <location>
        <begin position="19"/>
        <end position="38"/>
    </location>
</feature>
<feature type="strand" evidence="4">
    <location>
        <begin position="93"/>
        <end position="99"/>
    </location>
</feature>
<feature type="helix" evidence="4">
    <location>
        <begin position="101"/>
        <end position="106"/>
    </location>
</feature>
<feature type="helix" evidence="4">
    <location>
        <begin position="109"/>
        <end position="118"/>
    </location>
</feature>
<feature type="strand" evidence="4">
    <location>
        <begin position="122"/>
        <end position="128"/>
    </location>
</feature>
<feature type="helix" evidence="4">
    <location>
        <begin position="131"/>
        <end position="139"/>
    </location>
</feature>
<feature type="strand" evidence="4">
    <location>
        <begin position="144"/>
        <end position="149"/>
    </location>
</feature>
<feature type="helix" evidence="3">
    <location>
        <begin position="152"/>
        <end position="154"/>
    </location>
</feature>
<feature type="strand" evidence="4">
    <location>
        <begin position="158"/>
        <end position="166"/>
    </location>
</feature>
<feature type="strand" evidence="4">
    <location>
        <begin position="168"/>
        <end position="172"/>
    </location>
</feature>
<feature type="helix" evidence="4">
    <location>
        <begin position="177"/>
        <end position="180"/>
    </location>
</feature>
<feature type="helix" evidence="4">
    <location>
        <begin position="186"/>
        <end position="189"/>
    </location>
</feature>
<feature type="strand" evidence="4">
    <location>
        <begin position="192"/>
        <end position="197"/>
    </location>
</feature>
<feature type="strand" evidence="5">
    <location>
        <begin position="201"/>
        <end position="203"/>
    </location>
</feature>
<feature type="helix" evidence="4">
    <location>
        <begin position="204"/>
        <end position="213"/>
    </location>
</feature>
<feature type="strand" evidence="4">
    <location>
        <begin position="219"/>
        <end position="225"/>
    </location>
</feature>
<feature type="helix" evidence="4">
    <location>
        <begin position="227"/>
        <end position="234"/>
    </location>
</feature>
<feature type="turn" evidence="4">
    <location>
        <begin position="235"/>
        <end position="237"/>
    </location>
</feature>
<feature type="strand" evidence="4">
    <location>
        <begin position="240"/>
        <end position="244"/>
    </location>
</feature>
<feature type="helix" evidence="4">
    <location>
        <begin position="245"/>
        <end position="247"/>
    </location>
</feature>
<feature type="turn" evidence="4">
    <location>
        <begin position="250"/>
        <end position="252"/>
    </location>
</feature>
<feature type="strand" evidence="4">
    <location>
        <begin position="257"/>
        <end position="260"/>
    </location>
</feature>
<feature type="turn" evidence="4">
    <location>
        <begin position="262"/>
        <end position="264"/>
    </location>
</feature>
<feature type="strand" evidence="4">
    <location>
        <begin position="268"/>
        <end position="274"/>
    </location>
</feature>
<feature type="strand" evidence="6">
    <location>
        <begin position="276"/>
        <end position="278"/>
    </location>
</feature>
<feature type="helix" evidence="4">
    <location>
        <begin position="282"/>
        <end position="291"/>
    </location>
</feature>
<feature type="helix" evidence="4">
    <location>
        <begin position="297"/>
        <end position="306"/>
    </location>
</feature>
<feature type="helix" evidence="4">
    <location>
        <begin position="309"/>
        <end position="315"/>
    </location>
</feature>
<feature type="turn" evidence="4">
    <location>
        <begin position="316"/>
        <end position="318"/>
    </location>
</feature>
<comment type="function">
    <text>This protein is a positive regulator of gene expression for the cysteine regulon, a system of 10 or more loci involved in the biosynthesis of L-cysteine from inorganic sulfate. The inducer for CysB is N-acetylserine. CysB inhibits its own transcription.</text>
</comment>
<comment type="subunit">
    <text>Homotetramer.</text>
</comment>
<comment type="subcellular location">
    <subcellularLocation>
        <location>Cytoplasm</location>
    </subcellularLocation>
</comment>
<comment type="similarity">
    <text evidence="2">Belongs to the LysR transcriptional regulatory family.</text>
</comment>
<evidence type="ECO:0000255" key="1">
    <source>
        <dbReference type="PROSITE-ProRule" id="PRU00253"/>
    </source>
</evidence>
<evidence type="ECO:0000305" key="2"/>
<evidence type="ECO:0007829" key="3">
    <source>
        <dbReference type="PDB" id="4GWO"/>
    </source>
</evidence>
<evidence type="ECO:0007829" key="4">
    <source>
        <dbReference type="PDB" id="4LON"/>
    </source>
</evidence>
<evidence type="ECO:0007829" key="5">
    <source>
        <dbReference type="PDB" id="4LQ2"/>
    </source>
</evidence>
<evidence type="ECO:0007829" key="6">
    <source>
        <dbReference type="PDB" id="4LQ5"/>
    </source>
</evidence>